<gene>
    <name evidence="1" type="primary">rimP</name>
    <name type="ordered locus">BURPS1710b_1913</name>
</gene>
<keyword id="KW-0963">Cytoplasm</keyword>
<keyword id="KW-0690">Ribosome biogenesis</keyword>
<proteinExistence type="inferred from homology"/>
<organism>
    <name type="scientific">Burkholderia pseudomallei (strain 1710b)</name>
    <dbReference type="NCBI Taxonomy" id="320372"/>
    <lineage>
        <taxon>Bacteria</taxon>
        <taxon>Pseudomonadati</taxon>
        <taxon>Pseudomonadota</taxon>
        <taxon>Betaproteobacteria</taxon>
        <taxon>Burkholderiales</taxon>
        <taxon>Burkholderiaceae</taxon>
        <taxon>Burkholderia</taxon>
        <taxon>pseudomallei group</taxon>
    </lineage>
</organism>
<name>RIMP_BURP1</name>
<feature type="chain" id="PRO_0000229227" description="Ribosome maturation factor RimP">
    <location>
        <begin position="1"/>
        <end position="153"/>
    </location>
</feature>
<protein>
    <recommendedName>
        <fullName evidence="1">Ribosome maturation factor RimP</fullName>
    </recommendedName>
</protein>
<reference key="1">
    <citation type="journal article" date="2010" name="Genome Biol. Evol.">
        <title>Continuing evolution of Burkholderia mallei through genome reduction and large-scale rearrangements.</title>
        <authorList>
            <person name="Losada L."/>
            <person name="Ronning C.M."/>
            <person name="DeShazer D."/>
            <person name="Woods D."/>
            <person name="Fedorova N."/>
            <person name="Kim H.S."/>
            <person name="Shabalina S.A."/>
            <person name="Pearson T.R."/>
            <person name="Brinkac L."/>
            <person name="Tan P."/>
            <person name="Nandi T."/>
            <person name="Crabtree J."/>
            <person name="Badger J."/>
            <person name="Beckstrom-Sternberg S."/>
            <person name="Saqib M."/>
            <person name="Schutzer S.E."/>
            <person name="Keim P."/>
            <person name="Nierman W.C."/>
        </authorList>
    </citation>
    <scope>NUCLEOTIDE SEQUENCE [LARGE SCALE GENOMIC DNA]</scope>
    <source>
        <strain>1710b</strain>
    </source>
</reference>
<accession>Q3JSZ1</accession>
<comment type="function">
    <text evidence="1">Required for maturation of 30S ribosomal subunits.</text>
</comment>
<comment type="subcellular location">
    <subcellularLocation>
        <location evidence="1">Cytoplasm</location>
    </subcellularLocation>
</comment>
<comment type="similarity">
    <text evidence="1">Belongs to the RimP family.</text>
</comment>
<evidence type="ECO:0000255" key="1">
    <source>
        <dbReference type="HAMAP-Rule" id="MF_01077"/>
    </source>
</evidence>
<sequence length="153" mass="17218">MQLTELIETTVTGLGYELVDLERTGRGMVCVYIDQPAGITIDDCEKVTRQLQHVLTVENIDYERLEVSSPGLDRPLKKLADFTRFAGSEAVITLKKPLDGRKTYRGILHAPNGETIGLEFERKKGEAAMLDFTLADVDKARLIPHVDFRSRKQ</sequence>
<dbReference type="EMBL" id="CP000124">
    <property type="protein sequence ID" value="ABA48576.1"/>
    <property type="molecule type" value="Genomic_DNA"/>
</dbReference>
<dbReference type="RefSeq" id="WP_004526849.1">
    <property type="nucleotide sequence ID" value="NC_007434.1"/>
</dbReference>
<dbReference type="SMR" id="Q3JSZ1"/>
<dbReference type="EnsemblBacteria" id="ABA48576">
    <property type="protein sequence ID" value="ABA48576"/>
    <property type="gene ID" value="BURPS1710b_1913"/>
</dbReference>
<dbReference type="KEGG" id="bpm:BURPS1710b_1913"/>
<dbReference type="HOGENOM" id="CLU_070525_1_0_4"/>
<dbReference type="Proteomes" id="UP000002700">
    <property type="component" value="Chromosome I"/>
</dbReference>
<dbReference type="GO" id="GO:0005829">
    <property type="term" value="C:cytosol"/>
    <property type="evidence" value="ECO:0007669"/>
    <property type="project" value="TreeGrafter"/>
</dbReference>
<dbReference type="GO" id="GO:0000028">
    <property type="term" value="P:ribosomal small subunit assembly"/>
    <property type="evidence" value="ECO:0007669"/>
    <property type="project" value="TreeGrafter"/>
</dbReference>
<dbReference type="GO" id="GO:0006412">
    <property type="term" value="P:translation"/>
    <property type="evidence" value="ECO:0007669"/>
    <property type="project" value="TreeGrafter"/>
</dbReference>
<dbReference type="CDD" id="cd01734">
    <property type="entry name" value="YlxS_C"/>
    <property type="match status" value="1"/>
</dbReference>
<dbReference type="Gene3D" id="2.30.30.180">
    <property type="entry name" value="Ribosome maturation factor RimP, C-terminal domain"/>
    <property type="match status" value="1"/>
</dbReference>
<dbReference type="Gene3D" id="3.30.300.70">
    <property type="entry name" value="RimP-like superfamily, N-terminal"/>
    <property type="match status" value="1"/>
</dbReference>
<dbReference type="HAMAP" id="MF_01077">
    <property type="entry name" value="RimP"/>
    <property type="match status" value="1"/>
</dbReference>
<dbReference type="InterPro" id="IPR003728">
    <property type="entry name" value="Ribosome_maturation_RimP"/>
</dbReference>
<dbReference type="InterPro" id="IPR028998">
    <property type="entry name" value="RimP_C"/>
</dbReference>
<dbReference type="InterPro" id="IPR036847">
    <property type="entry name" value="RimP_C_sf"/>
</dbReference>
<dbReference type="InterPro" id="IPR028989">
    <property type="entry name" value="RimP_N"/>
</dbReference>
<dbReference type="InterPro" id="IPR035956">
    <property type="entry name" value="RimP_N_sf"/>
</dbReference>
<dbReference type="NCBIfam" id="NF000929">
    <property type="entry name" value="PRK00092.2-1"/>
    <property type="match status" value="1"/>
</dbReference>
<dbReference type="PANTHER" id="PTHR33867">
    <property type="entry name" value="RIBOSOME MATURATION FACTOR RIMP"/>
    <property type="match status" value="1"/>
</dbReference>
<dbReference type="PANTHER" id="PTHR33867:SF1">
    <property type="entry name" value="RIBOSOME MATURATION FACTOR RIMP"/>
    <property type="match status" value="1"/>
</dbReference>
<dbReference type="Pfam" id="PF17384">
    <property type="entry name" value="DUF150_C"/>
    <property type="match status" value="1"/>
</dbReference>
<dbReference type="Pfam" id="PF02576">
    <property type="entry name" value="RimP_N"/>
    <property type="match status" value="1"/>
</dbReference>
<dbReference type="SUPFAM" id="SSF74942">
    <property type="entry name" value="YhbC-like, C-terminal domain"/>
    <property type="match status" value="1"/>
</dbReference>
<dbReference type="SUPFAM" id="SSF75420">
    <property type="entry name" value="YhbC-like, N-terminal domain"/>
    <property type="match status" value="1"/>
</dbReference>